<sequence>MSFFAKLQGSDSESSSGSESEESILSGSEGERQDKKLAAQKKQQKSKASMFLNSEESESEEESSDEDEEEMSDSDDERQAVANKFLNDAASSDEESEEEDKIIVLSAKDKRFAEMEAAIHSIQNAVKNTDWVLASSELDKLFRFIARHLVTIVASPIPAEGHIPPRFLETLVSLEADVAKTLAAEKSAPKKMAPAKAKAVNGIRQTLKKKSKEFDGVLKTYNEDPEAYTAAYEKANAAPAAPKPKKAAVTTPGEGEDDEFMTIGKGGKTLNLTADGVFKTLREIFEARGRKNTDRAETIKILTKLLEVSETTYQKIRVLLALVPARLDYSQHLVSIPQESWVTALQEFDQLISILIAEPDYLVQETVGEYDDLVERTPEVVDGKKQKVLIAGSLISLLESLDSELTKTLQHTDAHEKGDEYIDRLKHEAPLYTTIVKAQTLFEREQLSDNIARTVIRRLEHIYAKPDIIIEHFESKATQAAAGLKSEITPFDVKRDASGVIHDLAVFIYQSDAPVLRARAILYHIFNQALHGRYHQARDLLLMSHLQDTISHADVTTQILYNRAVMQVGLAAFRLGFIPECQTILSEMFSTLRQKELLAQSVQRYNIQLSPEQELLEKRRLLPFHMHLNVELLEAAYLTSCMLVEIPLLASVDTEEQRRRVTSKTFKRLLDMADRQAFMGPPENTRDHIIKASQALQAGEWEKARDLIVSIKVWSLLDNAAEVKDILAKKIQEEGLRTSLFTYAAYYDSLSLSHLASTFNLPVGRITSIISRMIYTDELAASLDQIDGVVIFHRVEQSEVQRLAQQLAERTASMLEQNEKTLDVKLGNQGQGQDRDTRAVGGEGGRQQGERRGGRGTYRGRGGRGGRGGFNQGLGTTMGRRVTAQ</sequence>
<name>EIF3C_CRYNB</name>
<dbReference type="EMBL" id="AAEY01000024">
    <property type="protein sequence ID" value="EAL20734.1"/>
    <property type="molecule type" value="Genomic_DNA"/>
</dbReference>
<dbReference type="RefSeq" id="XP_775381.1">
    <property type="nucleotide sequence ID" value="XM_770288.1"/>
</dbReference>
<dbReference type="SMR" id="P0CN47"/>
<dbReference type="EnsemblFungi" id="AAW43537">
    <property type="protein sequence ID" value="AAW43537"/>
    <property type="gene ID" value="CNE01020"/>
</dbReference>
<dbReference type="GeneID" id="4936102"/>
<dbReference type="KEGG" id="cnb:CNBE0970"/>
<dbReference type="VEuPathDB" id="FungiDB:CNBE0970"/>
<dbReference type="HOGENOM" id="CLU_004304_0_2_1"/>
<dbReference type="OrthoDB" id="7693at5206"/>
<dbReference type="GO" id="GO:0016282">
    <property type="term" value="C:eukaryotic 43S preinitiation complex"/>
    <property type="evidence" value="ECO:0007669"/>
    <property type="project" value="UniProtKB-UniRule"/>
</dbReference>
<dbReference type="GO" id="GO:0033290">
    <property type="term" value="C:eukaryotic 48S preinitiation complex"/>
    <property type="evidence" value="ECO:0007669"/>
    <property type="project" value="UniProtKB-UniRule"/>
</dbReference>
<dbReference type="GO" id="GO:0071540">
    <property type="term" value="C:eukaryotic translation initiation factor 3 complex, eIF3e"/>
    <property type="evidence" value="ECO:0007669"/>
    <property type="project" value="EnsemblFungi"/>
</dbReference>
<dbReference type="GO" id="GO:0071541">
    <property type="term" value="C:eukaryotic translation initiation factor 3 complex, eIF3m"/>
    <property type="evidence" value="ECO:0007669"/>
    <property type="project" value="EnsemblFungi"/>
</dbReference>
<dbReference type="GO" id="GO:0003723">
    <property type="term" value="F:RNA binding"/>
    <property type="evidence" value="ECO:0007669"/>
    <property type="project" value="InterPro"/>
</dbReference>
<dbReference type="GO" id="GO:0003743">
    <property type="term" value="F:translation initiation factor activity"/>
    <property type="evidence" value="ECO:0007669"/>
    <property type="project" value="UniProtKB-UniRule"/>
</dbReference>
<dbReference type="GO" id="GO:0031369">
    <property type="term" value="F:translation initiation factor binding"/>
    <property type="evidence" value="ECO:0007669"/>
    <property type="project" value="InterPro"/>
</dbReference>
<dbReference type="GO" id="GO:0001732">
    <property type="term" value="P:formation of cytoplasmic translation initiation complex"/>
    <property type="evidence" value="ECO:0007669"/>
    <property type="project" value="UniProtKB-UniRule"/>
</dbReference>
<dbReference type="FunFam" id="1.10.10.10:FF:000300">
    <property type="entry name" value="Eukaryotic translation initiation factor 3 subunit C"/>
    <property type="match status" value="1"/>
</dbReference>
<dbReference type="Gene3D" id="1.10.10.10">
    <property type="entry name" value="Winged helix-like DNA-binding domain superfamily/Winged helix DNA-binding domain"/>
    <property type="match status" value="1"/>
</dbReference>
<dbReference type="HAMAP" id="MF_03002">
    <property type="entry name" value="eIF3c"/>
    <property type="match status" value="1"/>
</dbReference>
<dbReference type="InterPro" id="IPR027516">
    <property type="entry name" value="EIF3C"/>
</dbReference>
<dbReference type="InterPro" id="IPR008905">
    <property type="entry name" value="EIF3C_N_dom"/>
</dbReference>
<dbReference type="InterPro" id="IPR000717">
    <property type="entry name" value="PCI_dom"/>
</dbReference>
<dbReference type="InterPro" id="IPR036388">
    <property type="entry name" value="WH-like_DNA-bd_sf"/>
</dbReference>
<dbReference type="InterPro" id="IPR036390">
    <property type="entry name" value="WH_DNA-bd_sf"/>
</dbReference>
<dbReference type="PANTHER" id="PTHR13937">
    <property type="entry name" value="EUKARYOTIC TRANSLATION INITATION FACTOR 3, SUBUNIT 8 EIF3S8 -RELATED"/>
    <property type="match status" value="1"/>
</dbReference>
<dbReference type="PANTHER" id="PTHR13937:SF0">
    <property type="entry name" value="EUKARYOTIC TRANSLATION INITIATION FACTOR 3 SUBUNIT C-RELATED"/>
    <property type="match status" value="1"/>
</dbReference>
<dbReference type="Pfam" id="PF05470">
    <property type="entry name" value="eIF-3c_N"/>
    <property type="match status" value="1"/>
</dbReference>
<dbReference type="Pfam" id="PF01399">
    <property type="entry name" value="PCI"/>
    <property type="match status" value="1"/>
</dbReference>
<dbReference type="SMART" id="SM00088">
    <property type="entry name" value="PINT"/>
    <property type="match status" value="1"/>
</dbReference>
<dbReference type="SUPFAM" id="SSF46785">
    <property type="entry name" value="Winged helix' DNA-binding domain"/>
    <property type="match status" value="1"/>
</dbReference>
<dbReference type="PROSITE" id="PS50250">
    <property type="entry name" value="PCI"/>
    <property type="match status" value="1"/>
</dbReference>
<organism>
    <name type="scientific">Cryptococcus neoformans var. neoformans serotype D (strain B-3501A)</name>
    <name type="common">Filobasidiella neoformans</name>
    <dbReference type="NCBI Taxonomy" id="283643"/>
    <lineage>
        <taxon>Eukaryota</taxon>
        <taxon>Fungi</taxon>
        <taxon>Dikarya</taxon>
        <taxon>Basidiomycota</taxon>
        <taxon>Agaricomycotina</taxon>
        <taxon>Tremellomycetes</taxon>
        <taxon>Tremellales</taxon>
        <taxon>Cryptococcaceae</taxon>
        <taxon>Cryptococcus</taxon>
        <taxon>Cryptococcus neoformans species complex</taxon>
    </lineage>
</organism>
<keyword id="KW-0963">Cytoplasm</keyword>
<keyword id="KW-0396">Initiation factor</keyword>
<keyword id="KW-0648">Protein biosynthesis</keyword>
<evidence type="ECO:0000255" key="1">
    <source>
        <dbReference type="HAMAP-Rule" id="MF_03002"/>
    </source>
</evidence>
<evidence type="ECO:0000255" key="2">
    <source>
        <dbReference type="PROSITE-ProRule" id="PRU01185"/>
    </source>
</evidence>
<evidence type="ECO:0000256" key="3">
    <source>
        <dbReference type="SAM" id="MobiDB-lite"/>
    </source>
</evidence>
<accession>P0CN47</accession>
<accession>Q55ST7</accession>
<accession>Q5KH72</accession>
<proteinExistence type="inferred from homology"/>
<feature type="chain" id="PRO_0000410077" description="Eukaryotic translation initiation factor 3 subunit C">
    <location>
        <begin position="1"/>
        <end position="885"/>
    </location>
</feature>
<feature type="domain" description="PCI" evidence="2">
    <location>
        <begin position="624"/>
        <end position="797"/>
    </location>
</feature>
<feature type="region of interest" description="Disordered" evidence="3">
    <location>
        <begin position="1"/>
        <end position="81"/>
    </location>
</feature>
<feature type="region of interest" description="Disordered" evidence="3">
    <location>
        <begin position="822"/>
        <end position="885"/>
    </location>
</feature>
<feature type="compositionally biased region" description="Low complexity" evidence="3">
    <location>
        <begin position="9"/>
        <end position="28"/>
    </location>
</feature>
<feature type="compositionally biased region" description="Acidic residues" evidence="3">
    <location>
        <begin position="55"/>
        <end position="76"/>
    </location>
</feature>
<feature type="compositionally biased region" description="Gly residues" evidence="3">
    <location>
        <begin position="855"/>
        <end position="872"/>
    </location>
</feature>
<comment type="function">
    <text evidence="1">Component of the eukaryotic translation initiation factor 3 (eIF-3) complex, which is involved in protein synthesis of a specialized repertoire of mRNAs and, together with other initiation factors, stimulates binding of mRNA and methionyl-tRNAi to the 40S ribosome. The eIF-3 complex specifically targets and initiates translation of a subset of mRNAs involved in cell proliferation.</text>
</comment>
<comment type="subunit">
    <text evidence="1">Component of the eukaryotic translation initiation factor 3 (eIF-3) complex.</text>
</comment>
<comment type="subcellular location">
    <subcellularLocation>
        <location evidence="1">Cytoplasm</location>
    </subcellularLocation>
</comment>
<comment type="similarity">
    <text evidence="1">Belongs to the eIF-3 subunit C family.</text>
</comment>
<protein>
    <recommendedName>
        <fullName evidence="1">Eukaryotic translation initiation factor 3 subunit C</fullName>
        <shortName evidence="1">eIF3c</shortName>
    </recommendedName>
    <alternativeName>
        <fullName evidence="1">Eukaryotic translation initiation factor 3 93 kDa subunit homolog</fullName>
        <shortName evidence="1">eIF3 p93</shortName>
    </alternativeName>
    <alternativeName>
        <fullName evidence="1">Translation initiation factor eIF3, p93 subunit homolog</fullName>
    </alternativeName>
</protein>
<reference key="1">
    <citation type="journal article" date="2005" name="Science">
        <title>The genome of the basidiomycetous yeast and human pathogen Cryptococcus neoformans.</title>
        <authorList>
            <person name="Loftus B.J."/>
            <person name="Fung E."/>
            <person name="Roncaglia P."/>
            <person name="Rowley D."/>
            <person name="Amedeo P."/>
            <person name="Bruno D."/>
            <person name="Vamathevan J."/>
            <person name="Miranda M."/>
            <person name="Anderson I.J."/>
            <person name="Fraser J.A."/>
            <person name="Allen J.E."/>
            <person name="Bosdet I.E."/>
            <person name="Brent M.R."/>
            <person name="Chiu R."/>
            <person name="Doering T.L."/>
            <person name="Donlin M.J."/>
            <person name="D'Souza C.A."/>
            <person name="Fox D.S."/>
            <person name="Grinberg V."/>
            <person name="Fu J."/>
            <person name="Fukushima M."/>
            <person name="Haas B.J."/>
            <person name="Huang J.C."/>
            <person name="Janbon G."/>
            <person name="Jones S.J.M."/>
            <person name="Koo H.L."/>
            <person name="Krzywinski M.I."/>
            <person name="Kwon-Chung K.J."/>
            <person name="Lengeler K.B."/>
            <person name="Maiti R."/>
            <person name="Marra M.A."/>
            <person name="Marra R.E."/>
            <person name="Mathewson C.A."/>
            <person name="Mitchell T.G."/>
            <person name="Pertea M."/>
            <person name="Riggs F.R."/>
            <person name="Salzberg S.L."/>
            <person name="Schein J.E."/>
            <person name="Shvartsbeyn A."/>
            <person name="Shin H."/>
            <person name="Shumway M."/>
            <person name="Specht C.A."/>
            <person name="Suh B.B."/>
            <person name="Tenney A."/>
            <person name="Utterback T.R."/>
            <person name="Wickes B.L."/>
            <person name="Wortman J.R."/>
            <person name="Wye N.H."/>
            <person name="Kronstad J.W."/>
            <person name="Lodge J.K."/>
            <person name="Heitman J."/>
            <person name="Davis R.W."/>
            <person name="Fraser C.M."/>
            <person name="Hyman R.W."/>
        </authorList>
    </citation>
    <scope>NUCLEOTIDE SEQUENCE [LARGE SCALE GENOMIC DNA]</scope>
    <source>
        <strain>B-3501A</strain>
    </source>
</reference>
<gene>
    <name evidence="1" type="primary">NIP1</name>
    <name type="ordered locus">CNBE0970</name>
</gene>